<dbReference type="EMBL" id="AE000520">
    <property type="protein sequence ID" value="AAC65766.1"/>
    <property type="molecule type" value="Genomic_DNA"/>
</dbReference>
<dbReference type="PIR" id="H71280">
    <property type="entry name" value="H71280"/>
</dbReference>
<dbReference type="RefSeq" id="WP_010882238.1">
    <property type="nucleotide sequence ID" value="NC_021490.2"/>
</dbReference>
<dbReference type="IntAct" id="O83771">
    <property type="interactions" value="7"/>
</dbReference>
<dbReference type="STRING" id="243276.TP_0793"/>
<dbReference type="EnsemblBacteria" id="AAC65766">
    <property type="protein sequence ID" value="AAC65766"/>
    <property type="gene ID" value="TP_0793"/>
</dbReference>
<dbReference type="KEGG" id="tpa:TP_0793"/>
<dbReference type="KEGG" id="tpw:TPANIC_0793"/>
<dbReference type="eggNOG" id="ENOG5030P3E">
    <property type="taxonomic scope" value="Bacteria"/>
</dbReference>
<dbReference type="HOGENOM" id="CLU_494258_0_0_12"/>
<dbReference type="OrthoDB" id="358189at2"/>
<dbReference type="Proteomes" id="UP000000811">
    <property type="component" value="Chromosome"/>
</dbReference>
<accession>O83771</accession>
<gene>
    <name type="ordered locus">TP_0793</name>
</gene>
<protein>
    <recommendedName>
        <fullName>Uncharacterized protein TP_0793</fullName>
    </recommendedName>
</protein>
<sequence>MRTLTELDKKVLRAEFPQLSFSEDADIDRYFELRSLGDQRQALDIYNRTLLVKYPQKERRVLLMSYYRKRDVRFKEVLADALAELAQKKIQEIKKIIDFFAAAVAPLDLTDVRTLIRVCEKIVRSISLNRFESVHFSRKHTHYAQWLLYREKEMEKAADIIRMYVTDTLSSVRTFRQESHTRATYGFCTEAHGTDTSSTIDFSQLVFTAEQVRTIEIAKTITKIEDRVLAYAIKYWHRYDDRAFENTVLLYSRKYKTHHYNIFHSIKTGRSHQWKDEDILHLVLAHVASGYYYSISGDLYLQRNWHWLKARLVERAEHHHQKGKKVPATHRRSSTPHARKTAGTRARTRARKKELPALPSEKISKKDSGESKQKDETAGMERVFRHNTKNVRTCSSRASRTGTHAEARHSDIVTSSPVHQEGAATVERSSPPEETVESIAHIVKRITGKDYGVYRELFFKEVRTAIRTVLNRATVRRGLRLRARKNNAEDTIYHFLHTHYDDPYQRWPNSHEYQQVHTLGFSIHSLEPIIVTWAESEGL</sequence>
<organism>
    <name type="scientific">Treponema pallidum (strain Nichols)</name>
    <dbReference type="NCBI Taxonomy" id="243276"/>
    <lineage>
        <taxon>Bacteria</taxon>
        <taxon>Pseudomonadati</taxon>
        <taxon>Spirochaetota</taxon>
        <taxon>Spirochaetia</taxon>
        <taxon>Spirochaetales</taxon>
        <taxon>Treponemataceae</taxon>
        <taxon>Treponema</taxon>
    </lineage>
</organism>
<name>Y793_TREPA</name>
<feature type="chain" id="PRO_0000202327" description="Uncharacterized protein TP_0793">
    <location>
        <begin position="1"/>
        <end position="539"/>
    </location>
</feature>
<feature type="region of interest" description="Disordered" evidence="1">
    <location>
        <begin position="316"/>
        <end position="433"/>
    </location>
</feature>
<feature type="compositionally biased region" description="Basic residues" evidence="1">
    <location>
        <begin position="318"/>
        <end position="352"/>
    </location>
</feature>
<feature type="compositionally biased region" description="Basic and acidic residues" evidence="1">
    <location>
        <begin position="362"/>
        <end position="384"/>
    </location>
</feature>
<feature type="compositionally biased region" description="Polar residues" evidence="1">
    <location>
        <begin position="390"/>
        <end position="402"/>
    </location>
</feature>
<evidence type="ECO:0000256" key="1">
    <source>
        <dbReference type="SAM" id="MobiDB-lite"/>
    </source>
</evidence>
<keyword id="KW-1185">Reference proteome</keyword>
<proteinExistence type="predicted"/>
<reference key="1">
    <citation type="journal article" date="1998" name="Science">
        <title>Complete genome sequence of Treponema pallidum, the syphilis spirochete.</title>
        <authorList>
            <person name="Fraser C.M."/>
            <person name="Norris S.J."/>
            <person name="Weinstock G.M."/>
            <person name="White O."/>
            <person name="Sutton G.G."/>
            <person name="Dodson R.J."/>
            <person name="Gwinn M.L."/>
            <person name="Hickey E.K."/>
            <person name="Clayton R.A."/>
            <person name="Ketchum K.A."/>
            <person name="Sodergren E."/>
            <person name="Hardham J.M."/>
            <person name="McLeod M.P."/>
            <person name="Salzberg S.L."/>
            <person name="Peterson J.D."/>
            <person name="Khalak H.G."/>
            <person name="Richardson D.L."/>
            <person name="Howell J.K."/>
            <person name="Chidambaram M."/>
            <person name="Utterback T.R."/>
            <person name="McDonald L.A."/>
            <person name="Artiach P."/>
            <person name="Bowman C."/>
            <person name="Cotton M.D."/>
            <person name="Fujii C."/>
            <person name="Garland S.A."/>
            <person name="Hatch B."/>
            <person name="Horst K."/>
            <person name="Roberts K.M."/>
            <person name="Sandusky M."/>
            <person name="Weidman J.F."/>
            <person name="Smith H.O."/>
            <person name="Venter J.C."/>
        </authorList>
    </citation>
    <scope>NUCLEOTIDE SEQUENCE [LARGE SCALE GENOMIC DNA]</scope>
    <source>
        <strain>Nichols</strain>
    </source>
</reference>